<accession>Q49150</accession>
<accession>C5B129</accession>
<accession>P71518</accession>
<proteinExistence type="evidence at protein level"/>
<gene>
    <name type="primary">pqqCD</name>
    <name type="ordered locus">MexAM1_META1p1749</name>
</gene>
<dbReference type="EC" id="1.3.3.11"/>
<dbReference type="EMBL" id="CP001510">
    <property type="protein sequence ID" value="ACS39593.1"/>
    <property type="molecule type" value="Genomic_DNA"/>
</dbReference>
<dbReference type="EMBL" id="L25889">
    <property type="protein sequence ID" value="AAA17880.1"/>
    <property type="molecule type" value="Unassigned_DNA"/>
</dbReference>
<dbReference type="EMBL" id="U72662">
    <property type="protein sequence ID" value="AAB58899.1"/>
    <property type="molecule type" value="Genomic_DNA"/>
</dbReference>
<dbReference type="PIR" id="C55527">
    <property type="entry name" value="C55527"/>
</dbReference>
<dbReference type="RefSeq" id="WP_012752611.1">
    <property type="nucleotide sequence ID" value="NC_012808.1"/>
</dbReference>
<dbReference type="PDB" id="5SXY">
    <property type="method" value="NMR"/>
    <property type="chains" value="A=280-372"/>
</dbReference>
<dbReference type="PDB" id="5VRC">
    <property type="method" value="X-ray"/>
    <property type="resolution" value="2.00 A"/>
    <property type="chains" value="A/B/C/D=1-260"/>
</dbReference>
<dbReference type="PDB" id="5VRD">
    <property type="method" value="X-ray"/>
    <property type="resolution" value="2.85 A"/>
    <property type="chains" value="A/B/C/D=1-372"/>
</dbReference>
<dbReference type="PDBsum" id="5SXY"/>
<dbReference type="PDBsum" id="5VRC"/>
<dbReference type="PDBsum" id="5VRD"/>
<dbReference type="SMR" id="Q49150"/>
<dbReference type="STRING" id="272630.MexAM1_META1p1749"/>
<dbReference type="KEGG" id="mea:Mex_1p1749"/>
<dbReference type="eggNOG" id="COG5424">
    <property type="taxonomic scope" value="Bacteria"/>
</dbReference>
<dbReference type="HOGENOM" id="CLU_764642_0_0_5"/>
<dbReference type="OrthoDB" id="9800756at2"/>
<dbReference type="BRENDA" id="1.3.3.11">
    <property type="organism ID" value="3296"/>
</dbReference>
<dbReference type="UniPathway" id="UPA00539"/>
<dbReference type="Proteomes" id="UP000009081">
    <property type="component" value="Chromosome"/>
</dbReference>
<dbReference type="GO" id="GO:0033732">
    <property type="term" value="F:pyrroloquinoline-quinone synthase activity"/>
    <property type="evidence" value="ECO:0007669"/>
    <property type="project" value="UniProtKB-EC"/>
</dbReference>
<dbReference type="GO" id="GO:0048038">
    <property type="term" value="F:quinone binding"/>
    <property type="evidence" value="ECO:0007669"/>
    <property type="project" value="InterPro"/>
</dbReference>
<dbReference type="GO" id="GO:0018189">
    <property type="term" value="P:pyrroloquinoline quinone biosynthetic process"/>
    <property type="evidence" value="ECO:0007669"/>
    <property type="project" value="UniProtKB-UniRule"/>
</dbReference>
<dbReference type="GO" id="GO:0006790">
    <property type="term" value="P:sulfur compound metabolic process"/>
    <property type="evidence" value="ECO:0007669"/>
    <property type="project" value="UniProtKB-ARBA"/>
</dbReference>
<dbReference type="CDD" id="cd19370">
    <property type="entry name" value="TenA_PqqC"/>
    <property type="match status" value="1"/>
</dbReference>
<dbReference type="Gene3D" id="1.10.10.1150">
    <property type="entry name" value="Coenzyme PQQ synthesis protein D (PqqD)"/>
    <property type="match status" value="1"/>
</dbReference>
<dbReference type="Gene3D" id="1.20.910.10">
    <property type="entry name" value="Heme oxygenase-like"/>
    <property type="match status" value="1"/>
</dbReference>
<dbReference type="HAMAP" id="MF_00654">
    <property type="entry name" value="PQQ_syn_PqqC"/>
    <property type="match status" value="1"/>
</dbReference>
<dbReference type="InterPro" id="IPR016084">
    <property type="entry name" value="Haem_Oase-like_multi-hlx"/>
</dbReference>
<dbReference type="InterPro" id="IPR011845">
    <property type="entry name" value="PqqC"/>
</dbReference>
<dbReference type="InterPro" id="IPR039068">
    <property type="entry name" value="PqqC-like"/>
</dbReference>
<dbReference type="InterPro" id="IPR008792">
    <property type="entry name" value="PQQD"/>
</dbReference>
<dbReference type="InterPro" id="IPR022479">
    <property type="entry name" value="PqqD_bac"/>
</dbReference>
<dbReference type="InterPro" id="IPR041881">
    <property type="entry name" value="PqqD_sf"/>
</dbReference>
<dbReference type="InterPro" id="IPR004305">
    <property type="entry name" value="Thiaminase-2/PQQC"/>
</dbReference>
<dbReference type="NCBIfam" id="TIGR03859">
    <property type="entry name" value="PQQ_PqqD"/>
    <property type="match status" value="1"/>
</dbReference>
<dbReference type="NCBIfam" id="TIGR02111">
    <property type="entry name" value="PQQ_syn_pqqC"/>
    <property type="match status" value="1"/>
</dbReference>
<dbReference type="PANTHER" id="PTHR40279:SF3">
    <property type="entry name" value="4-AMINOBENZOATE SYNTHASE"/>
    <property type="match status" value="1"/>
</dbReference>
<dbReference type="PANTHER" id="PTHR40279">
    <property type="entry name" value="PQQC-LIKE PROTEIN"/>
    <property type="match status" value="1"/>
</dbReference>
<dbReference type="Pfam" id="PF05402">
    <property type="entry name" value="PqqD"/>
    <property type="match status" value="1"/>
</dbReference>
<dbReference type="Pfam" id="PF03070">
    <property type="entry name" value="TENA_THI-4"/>
    <property type="match status" value="1"/>
</dbReference>
<dbReference type="SUPFAM" id="SSF48613">
    <property type="entry name" value="Heme oxygenase-like"/>
    <property type="match status" value="1"/>
</dbReference>
<keyword id="KW-0002">3D-structure</keyword>
<keyword id="KW-0560">Oxidoreductase</keyword>
<keyword id="KW-0884">PQQ biosynthesis</keyword>
<keyword id="KW-1185">Reference proteome</keyword>
<name>PQQCD_METEA</name>
<organism>
    <name type="scientific">Methylorubrum extorquens (strain ATCC 14718 / DSM 1338 / JCM 2805 / NCIMB 9133 / AM1)</name>
    <name type="common">Methylobacterium extorquens</name>
    <dbReference type="NCBI Taxonomy" id="272630"/>
    <lineage>
        <taxon>Bacteria</taxon>
        <taxon>Pseudomonadati</taxon>
        <taxon>Pseudomonadota</taxon>
        <taxon>Alphaproteobacteria</taxon>
        <taxon>Hyphomicrobiales</taxon>
        <taxon>Methylobacteriaceae</taxon>
        <taxon>Methylorubrum</taxon>
    </lineage>
</organism>
<sequence length="372" mass="41577">MTAQFPPPVPDTEQRLLSHEELEAALRDIGARRYHNLHPFHRLLHDGKLSKDQVRAWALNRYYYQAMIPVKDAALLARLPDAQLRRIWRQRIVDHDGDHEGDGGIERWLKLAEGVGFTRDYVLSTKGILSATRFSVDAYVHFVSERSLLEAIASSLTEMFSPTIISERVAGMLKNYDFITKDTLAYFDKRLTQAPRDADFALDYVKRHATTPEMQRAAIDALTFKCNVLWTQLDALYFAYVAPGMVPPDAWQPGEGLVAETNSAEDSPAAAASPAATTAEPTAFSGSDVPRLPRGVRLRFDEVRNKHVLLAPERTFDLDDNAVAVLKLVDGRNTVSQIAQILGQTYDADPAIIEADILPMLAGLAQKRVLER</sequence>
<reference key="1">
    <citation type="journal article" date="2009" name="PLoS ONE">
        <title>Methylobacterium genome sequences: a reference blueprint to investigate microbial metabolism of C1 compounds from natural and industrial sources.</title>
        <authorList>
            <person name="Vuilleumier S."/>
            <person name="Chistoserdova L."/>
            <person name="Lee M.-C."/>
            <person name="Bringel F."/>
            <person name="Lajus A."/>
            <person name="Zhou Y."/>
            <person name="Gourion B."/>
            <person name="Barbe V."/>
            <person name="Chang J."/>
            <person name="Cruveiller S."/>
            <person name="Dossat C."/>
            <person name="Gillett W."/>
            <person name="Gruffaz C."/>
            <person name="Haugen E."/>
            <person name="Hourcade E."/>
            <person name="Levy R."/>
            <person name="Mangenot S."/>
            <person name="Muller E."/>
            <person name="Nadalig T."/>
            <person name="Pagni M."/>
            <person name="Penny C."/>
            <person name="Peyraud R."/>
            <person name="Robinson D.G."/>
            <person name="Roche D."/>
            <person name="Rouy Z."/>
            <person name="Saenampechek C."/>
            <person name="Salvignol G."/>
            <person name="Vallenet D."/>
            <person name="Wu Z."/>
            <person name="Marx C.J."/>
            <person name="Vorholt J.A."/>
            <person name="Olson M.V."/>
            <person name="Kaul R."/>
            <person name="Weissenbach J."/>
            <person name="Medigue C."/>
            <person name="Lidstrom M.E."/>
        </authorList>
    </citation>
    <scope>NUCLEOTIDE SEQUENCE [LARGE SCALE GENOMIC DNA]</scope>
    <source>
        <strain>ATCC 14718 / DSM 1338 / JCM 2805 / NCIMB 9133 / AM1</strain>
    </source>
</reference>
<reference key="2">
    <citation type="journal article" date="1994" name="J. Bacteriol.">
        <title>Isolation, phenotypic characterization, and complementation analysis of mutants of Methylobacterium extorquens AM1 unable to synthesize pyrroloquinoline quinone and sequences of pqqD, pqqG, and pqqC.</title>
        <authorList>
            <person name="Morris C.J."/>
            <person name="Biville F."/>
            <person name="Turlin E."/>
            <person name="Lee E."/>
            <person name="Ellermann K."/>
            <person name="Fan W.H."/>
            <person name="Ramamoorthi R."/>
            <person name="Springer A.L."/>
            <person name="Lidstrom M.E."/>
        </authorList>
    </citation>
    <scope>NUCLEOTIDE SEQUENCE [GENOMIC DNA] OF 1-111</scope>
</reference>
<reference key="3">
    <citation type="journal article" date="1997" name="Microbiology">
        <title>Sequence analysis of pqq genes required for biosynthesis of pyrroloquinoline quinone in Methylobacterium extorquens AM1 and the purification of a biosynthetic intermediate.</title>
        <authorList>
            <person name="Toyama H."/>
            <person name="Chistoserdova L."/>
            <person name="Lidstrom M.E."/>
        </authorList>
    </citation>
    <scope>NUCLEOTIDE SEQUENCE [GENOMIC DNA] OF 110-372</scope>
</reference>
<reference key="4">
    <citation type="journal article" date="2015" name="J. Biol. Chem.">
        <title>PqqD is a novel peptide chaperone that forms a ternary complex with the radical S-adenosylmethionine protein PqqE in the pyrroloquinoline quinone biosynthetic pathway.</title>
        <authorList>
            <person name="Latham J.A."/>
            <person name="Iavarone A.T."/>
            <person name="Barr I."/>
            <person name="Juthani P.V."/>
            <person name="Klinman J.P."/>
        </authorList>
    </citation>
    <scope>SUBUNIT</scope>
    <scope>INTERACTION WITH PQQA AND PQQE</scope>
    <source>
        <strain>ATCC 14718 / DSM 1338 / JCM 2805 / NCIMB 9133 / AM1</strain>
    </source>
</reference>
<reference key="5">
    <citation type="journal article" date="2016" name="Biomol. NMR. Assign.">
        <title>(1)H, (13)C, and (15)N resonance assignments and secondary structure information for Methylobacterium extorquens PqqD and the complex of PqqD with PqqA.</title>
        <authorList>
            <person name="Evans R.L. III"/>
            <person name="Latham J.A."/>
            <person name="Klinman J.P."/>
            <person name="Wilmot C.M."/>
            <person name="Xia Y."/>
        </authorList>
    </citation>
    <scope>FUNCTION OF PQQD REGION</scope>
    <scope>SUBUNIT</scope>
    <scope>INTERACTION WITH PQQA AND PQQE</scope>
    <source>
        <strain>ATCC 14718 / DSM 1338 / JCM 2805 / NCIMB 9133 / AM1</strain>
    </source>
</reference>
<reference key="6">
    <citation type="journal article" date="2017" name="Biochemistry">
        <title>Nuclear magnetic resonance structure and binding studies of PqqD, a chaperone required in the biosynthesis of the bacterial dehydrogenase cofactor pyrroloquinoline quinone.</title>
        <authorList>
            <person name="Evans R.L. III"/>
            <person name="Latham J.A."/>
            <person name="Xia Y."/>
            <person name="Klinman J.P."/>
            <person name="Wilmot C.M."/>
        </authorList>
    </citation>
    <scope>STRUCTURE BY NMR OF 280-372</scope>
    <scope>FUNCTION OF PQQD REGION</scope>
    <scope>INTERACTION WITH PQQA AND PQQE</scope>
</reference>
<feature type="chain" id="PRO_0000219980" description="Bifunctional coenzyme PQQ synthesis protein C/D">
    <location>
        <begin position="1"/>
        <end position="372"/>
    </location>
</feature>
<feature type="region of interest" description="PqqC">
    <location>
        <begin position="1"/>
        <end position="267"/>
    </location>
</feature>
<feature type="region of interest" description="Disordered" evidence="2">
    <location>
        <begin position="260"/>
        <end position="288"/>
    </location>
</feature>
<feature type="region of interest" description="Linker">
    <location>
        <begin position="268"/>
        <end position="280"/>
    </location>
</feature>
<feature type="region of interest" description="PqqD">
    <location>
        <begin position="281"/>
        <end position="372"/>
    </location>
</feature>
<feature type="compositionally biased region" description="Low complexity" evidence="2">
    <location>
        <begin position="264"/>
        <end position="283"/>
    </location>
</feature>
<feature type="helix" evidence="9">
    <location>
        <begin position="19"/>
        <end position="33"/>
    </location>
</feature>
<feature type="helix" evidence="9">
    <location>
        <begin position="35"/>
        <end position="37"/>
    </location>
</feature>
<feature type="helix" evidence="9">
    <location>
        <begin position="39"/>
        <end position="45"/>
    </location>
</feature>
<feature type="helix" evidence="9">
    <location>
        <begin position="51"/>
        <end position="76"/>
    </location>
</feature>
<feature type="helix" evidence="9">
    <location>
        <begin position="82"/>
        <end position="96"/>
    </location>
</feature>
<feature type="turn" evidence="9">
    <location>
        <begin position="100"/>
        <end position="102"/>
    </location>
</feature>
<feature type="helix" evidence="9">
    <location>
        <begin position="104"/>
        <end position="114"/>
    </location>
</feature>
<feature type="helix" evidence="9">
    <location>
        <begin position="119"/>
        <end position="124"/>
    </location>
</feature>
<feature type="helix" evidence="9">
    <location>
        <begin position="130"/>
        <end position="145"/>
    </location>
</feature>
<feature type="helix" evidence="9">
    <location>
        <begin position="148"/>
        <end position="153"/>
    </location>
</feature>
<feature type="helix" evidence="9">
    <location>
        <begin position="154"/>
        <end position="160"/>
    </location>
</feature>
<feature type="helix" evidence="9">
    <location>
        <begin position="169"/>
        <end position="173"/>
    </location>
</feature>
<feature type="helix" evidence="9">
    <location>
        <begin position="181"/>
        <end position="185"/>
    </location>
</feature>
<feature type="helix" evidence="9">
    <location>
        <begin position="200"/>
        <end position="208"/>
    </location>
</feature>
<feature type="helix" evidence="9">
    <location>
        <begin position="212"/>
        <end position="240"/>
    </location>
</feature>
<feature type="turn" evidence="9">
    <location>
        <begin position="253"/>
        <end position="256"/>
    </location>
</feature>
<feature type="strand" evidence="8">
    <location>
        <begin position="298"/>
        <end position="301"/>
    </location>
</feature>
<feature type="turn" evidence="8">
    <location>
        <begin position="302"/>
        <end position="305"/>
    </location>
</feature>
<feature type="strand" evidence="8">
    <location>
        <begin position="306"/>
        <end position="310"/>
    </location>
</feature>
<feature type="strand" evidence="8">
    <location>
        <begin position="315"/>
        <end position="317"/>
    </location>
</feature>
<feature type="helix" evidence="8">
    <location>
        <begin position="320"/>
        <end position="328"/>
    </location>
</feature>
<feature type="helix" evidence="8">
    <location>
        <begin position="335"/>
        <end position="346"/>
    </location>
</feature>
<feature type="helix" evidence="8">
    <location>
        <begin position="350"/>
        <end position="365"/>
    </location>
</feature>
<feature type="turn" evidence="8">
    <location>
        <begin position="366"/>
        <end position="368"/>
    </location>
</feature>
<evidence type="ECO:0000250" key="1"/>
<evidence type="ECO:0000256" key="2">
    <source>
        <dbReference type="SAM" id="MobiDB-lite"/>
    </source>
</evidence>
<evidence type="ECO:0000269" key="3">
    <source>
    </source>
</evidence>
<evidence type="ECO:0000269" key="4">
    <source>
    </source>
</evidence>
<evidence type="ECO:0000269" key="5">
    <source>
    </source>
</evidence>
<evidence type="ECO:0000303" key="6">
    <source>
    </source>
</evidence>
<evidence type="ECO:0000305" key="7"/>
<evidence type="ECO:0007829" key="8">
    <source>
        <dbReference type="PDB" id="5SXY"/>
    </source>
</evidence>
<evidence type="ECO:0007829" key="9">
    <source>
        <dbReference type="PDB" id="5VRC"/>
    </source>
</evidence>
<protein>
    <recommendedName>
        <fullName>Bifunctional coenzyme PQQ synthesis protein C/D</fullName>
    </recommendedName>
    <alternativeName>
        <fullName>Pyrroloquinoline quinone biosynthesis protein C/D</fullName>
    </alternativeName>
    <domain>
        <recommendedName>
            <fullName>Pyrroloquinoline-quinone synthase</fullName>
            <ecNumber>1.3.3.11</ecNumber>
        </recommendedName>
        <alternativeName>
            <fullName>Coenzyme PQQ synthesis protein C</fullName>
        </alternativeName>
    </domain>
    <domain>
        <recommendedName>
            <fullName evidence="6">PqqA binding protein</fullName>
        </recommendedName>
        <alternativeName>
            <fullName>Coenzyme PQQ synthesis protein D</fullName>
        </alternativeName>
    </domain>
</protein>
<comment type="function">
    <text evidence="1">The PqqC region is involved in ring cyclization and eight-electron oxidation of 3a-(2-amino-2-carboxyethyl)-4,5-dioxo-4,5,6,7,8,9-hexahydroquinoline-7,9-dicarboxylic-acid to PQQ.</text>
</comment>
<comment type="function">
    <text evidence="4 5">The PqqD region functions as a PqqA binding domain and presents PqqA to PqqE.</text>
</comment>
<comment type="catalytic activity">
    <reaction>
        <text>6-(2-amino-2-carboxyethyl)-7,8-dioxo-1,2,3,4,7,8-hexahydroquinoline-2,4-dicarboxylate + 3 O2 = pyrroloquinoline quinone + 2 H2O2 + 2 H2O + H(+)</text>
        <dbReference type="Rhea" id="RHEA:10692"/>
        <dbReference type="ChEBI" id="CHEBI:15377"/>
        <dbReference type="ChEBI" id="CHEBI:15378"/>
        <dbReference type="ChEBI" id="CHEBI:15379"/>
        <dbReference type="ChEBI" id="CHEBI:16240"/>
        <dbReference type="ChEBI" id="CHEBI:58442"/>
        <dbReference type="ChEBI" id="CHEBI:58778"/>
        <dbReference type="EC" id="1.3.3.11"/>
    </reaction>
</comment>
<comment type="pathway">
    <text>Cofactor biosynthesis; pyrroloquinoline quinone biosynthesis.</text>
</comment>
<comment type="subunit">
    <text evidence="3 4 5">Monomer (PubMed:25817994, PubMed:27638737). Interacts with PqqE (PubMed:25817994, PubMed:27638737, PubMed:28481092).</text>
</comment>
<comment type="similarity">
    <text evidence="7">In the N-terminal section; belongs to the PqqC family.</text>
</comment>
<comment type="similarity">
    <text evidence="7">In the C-terminal section; belongs to the PqqD family.</text>
</comment>